<dbReference type="EMBL" id="AF132382">
    <property type="protein sequence ID" value="AAF37040.1"/>
    <property type="molecule type" value="Genomic_DNA"/>
</dbReference>
<dbReference type="EMBL" id="AF132377">
    <property type="protein sequence ID" value="AAF37030.1"/>
    <property type="molecule type" value="Genomic_DNA"/>
</dbReference>
<dbReference type="EMBL" id="AF132378">
    <property type="protein sequence ID" value="AAF37032.1"/>
    <property type="molecule type" value="Genomic_DNA"/>
</dbReference>
<dbReference type="EMBL" id="AF132379">
    <property type="protein sequence ID" value="AAF37034.1"/>
    <property type="molecule type" value="Genomic_DNA"/>
</dbReference>
<dbReference type="EMBL" id="AF132380">
    <property type="protein sequence ID" value="AAF37036.1"/>
    <property type="molecule type" value="Genomic_DNA"/>
</dbReference>
<dbReference type="EMBL" id="AF132381">
    <property type="protein sequence ID" value="AAF37038.1"/>
    <property type="molecule type" value="Genomic_DNA"/>
</dbReference>
<dbReference type="SMR" id="Q9MDB7"/>
<dbReference type="GO" id="GO:0031966">
    <property type="term" value="C:mitochondrial membrane"/>
    <property type="evidence" value="ECO:0007669"/>
    <property type="project" value="UniProtKB-SubCell"/>
</dbReference>
<dbReference type="GO" id="GO:0045259">
    <property type="term" value="C:proton-transporting ATP synthase complex"/>
    <property type="evidence" value="ECO:0007669"/>
    <property type="project" value="UniProtKB-KW"/>
</dbReference>
<dbReference type="GO" id="GO:0015078">
    <property type="term" value="F:proton transmembrane transporter activity"/>
    <property type="evidence" value="ECO:0007669"/>
    <property type="project" value="InterPro"/>
</dbReference>
<dbReference type="GO" id="GO:0015986">
    <property type="term" value="P:proton motive force-driven ATP synthesis"/>
    <property type="evidence" value="ECO:0007669"/>
    <property type="project" value="InterPro"/>
</dbReference>
<dbReference type="InterPro" id="IPR001421">
    <property type="entry name" value="ATP8_metazoa"/>
</dbReference>
<dbReference type="InterPro" id="IPR050635">
    <property type="entry name" value="ATPase_protein_8"/>
</dbReference>
<dbReference type="PANTHER" id="PTHR39937">
    <property type="entry name" value="ATP SYNTHASE PROTEIN 8"/>
    <property type="match status" value="1"/>
</dbReference>
<dbReference type="PANTHER" id="PTHR39937:SF1">
    <property type="entry name" value="ATP SYNTHASE PROTEIN 8"/>
    <property type="match status" value="1"/>
</dbReference>
<dbReference type="Pfam" id="PF00895">
    <property type="entry name" value="ATP-synt_8"/>
    <property type="match status" value="1"/>
</dbReference>
<protein>
    <recommendedName>
        <fullName evidence="1">ATP synthase F(0) complex subunit 8</fullName>
    </recommendedName>
    <alternativeName>
        <fullName>A6L</fullName>
    </alternativeName>
    <alternativeName>
        <fullName>F-ATPase subunit 8</fullName>
    </alternativeName>
</protein>
<proteinExistence type="inferred from homology"/>
<organism>
    <name type="scientific">Columbina passerina</name>
    <name type="common">Common ground-dove</name>
    <name type="synonym">Columba passerina</name>
    <dbReference type="NCBI Taxonomy" id="111974"/>
    <lineage>
        <taxon>Eukaryota</taxon>
        <taxon>Metazoa</taxon>
        <taxon>Chordata</taxon>
        <taxon>Craniata</taxon>
        <taxon>Vertebrata</taxon>
        <taxon>Euteleostomi</taxon>
        <taxon>Archelosauria</taxon>
        <taxon>Archosauria</taxon>
        <taxon>Dinosauria</taxon>
        <taxon>Saurischia</taxon>
        <taxon>Theropoda</taxon>
        <taxon>Coelurosauria</taxon>
        <taxon>Aves</taxon>
        <taxon>Neognathae</taxon>
        <taxon>Neoaves</taxon>
        <taxon>Columbimorphae</taxon>
        <taxon>Columbiformes</taxon>
        <taxon>Columbidae</taxon>
        <taxon>Columbina</taxon>
    </lineage>
</organism>
<comment type="function">
    <text evidence="1 2">Subunit 8, of the mitochondrial membrane ATP synthase complex (F(1)F(0) ATP synthase or Complex V) that produces ATP from ADP in the presence of a proton gradient across the membrane which is generated by electron transport complexes of the respiratory chain. ATP synthase complex consist of a soluble F(1) head domain - the catalytic core - and a membrane F(1) domain - the membrane proton channel. These two domains are linked by a central stalk rotating inside the F(1) region and a stationary peripheral stalk. During catalysis, ATP synthesis in the catalytic domain of F(1) is coupled via a rotary mechanism of the central stalk subunits to proton translocation (By similarity). In vivo, can only synthesize ATP although its ATP hydrolase activity can be activated artificially in vitro (By similarity). Part of the complex F(0) domain (By similarity).</text>
</comment>
<comment type="subunit">
    <text evidence="1">Component of the ATP synthase complex composed at least of ATP5F1A/subunit alpha, ATP5F1B/subunit beta, ATP5MC1/subunit c (homooctomer), MT-ATP6/subunit a, MT-ATP8/subunit 8, ATP5ME/subunit e, ATP5MF/subunit f, ATP5MG/subunit g, ATP5MK/subunit k, ATP5MJ/subunit j, ATP5F1C/subunit gamma, ATP5F1D/subunit delta, ATP5F1E/subunit epsilon, ATP5PF/subunit F6, ATP5PB/subunit b, ATP5PD/subunit d, ATP5PO/subunit OSCP. ATP synthase complex consists of a soluble F(1) head domain (subunits alpha(3) and beta(3)) - the catalytic core - and a membrane F(0) domain - the membrane proton channel (subunits c, a, 8, e, f, g, k and j). These two domains are linked by a central stalk (subunits gamma, delta, and epsilon) rotating inside the F1 region and a stationary peripheral stalk (subunits F6, b, d, and OSCP).</text>
</comment>
<comment type="subcellular location">
    <subcellularLocation>
        <location>Mitochondrion membrane</location>
        <topology>Single-pass membrane protein</topology>
    </subcellularLocation>
</comment>
<comment type="similarity">
    <text evidence="4">Belongs to the ATPase protein 8 family.</text>
</comment>
<name>ATP8_COLPA</name>
<geneLocation type="mitochondrion"/>
<keyword id="KW-0066">ATP synthesis</keyword>
<keyword id="KW-0138">CF(0)</keyword>
<keyword id="KW-0375">Hydrogen ion transport</keyword>
<keyword id="KW-0406">Ion transport</keyword>
<keyword id="KW-0472">Membrane</keyword>
<keyword id="KW-0496">Mitochondrion</keyword>
<keyword id="KW-0812">Transmembrane</keyword>
<keyword id="KW-1133">Transmembrane helix</keyword>
<keyword id="KW-0813">Transport</keyword>
<accession>Q9MDB7</accession>
<reference key="1">
    <citation type="journal article" date="1999" name="Biol. Invasions">
        <title>The assembly of an island fauna by natural invasion: sources and temporal patterns in the avian colonization of Barbados.</title>
        <authorList>
            <person name="Lovette I.J."/>
            <person name="Seutin G."/>
            <person name="Ricklefs R.E."/>
            <person name="Bermingham E."/>
        </authorList>
        <dbReference type="AGRICOLA" id="IND23252729"/>
    </citation>
    <scope>NUCLEOTIDE SEQUENCE [GENOMIC DNA]</scope>
    <source>
        <strain>Isolate BA-CPA2</strain>
        <strain>Isolate BA-CPA4</strain>
        <strain>Isolate MA-CPA4</strain>
        <strain>Isolate MA-CPA5</strain>
        <strain>Isolate SV-CPA4</strain>
        <strain>Isolate SV-CPA5</strain>
    </source>
</reference>
<evidence type="ECO:0000250" key="1">
    <source>
        <dbReference type="UniProtKB" id="P03928"/>
    </source>
</evidence>
<evidence type="ECO:0000250" key="2">
    <source>
        <dbReference type="UniProtKB" id="P19483"/>
    </source>
</evidence>
<evidence type="ECO:0000255" key="3"/>
<evidence type="ECO:0000305" key="4"/>
<sequence length="55" mass="6438">MPQLNPSPWFFIMLTTWLTFSLIIQPKLLSFTPTNPPSNKISTTTKTTPWTWPWT</sequence>
<feature type="chain" id="PRO_0000195511" description="ATP synthase F(0) complex subunit 8">
    <location>
        <begin position="1"/>
        <end position="55"/>
    </location>
</feature>
<feature type="transmembrane region" description="Helical" evidence="3">
    <location>
        <begin position="7"/>
        <end position="24"/>
    </location>
</feature>
<gene>
    <name evidence="1" type="primary">MT-ATP8</name>
    <name type="synonym">ATP8</name>
    <name type="synonym">ATPASE8</name>
    <name type="synonym">MTATP8</name>
</gene>